<accession>Q1C5I4</accession>
<gene>
    <name evidence="1" type="primary">ndk</name>
    <name type="ordered locus">YPA_2323</name>
</gene>
<keyword id="KW-0067">ATP-binding</keyword>
<keyword id="KW-0963">Cytoplasm</keyword>
<keyword id="KW-0418">Kinase</keyword>
<keyword id="KW-0460">Magnesium</keyword>
<keyword id="KW-0479">Metal-binding</keyword>
<keyword id="KW-0546">Nucleotide metabolism</keyword>
<keyword id="KW-0547">Nucleotide-binding</keyword>
<keyword id="KW-0597">Phosphoprotein</keyword>
<keyword id="KW-0808">Transferase</keyword>
<dbReference type="EC" id="2.7.4.6" evidence="1"/>
<dbReference type="EMBL" id="CP000308">
    <property type="protein sequence ID" value="ABG14288.1"/>
    <property type="molecule type" value="Genomic_DNA"/>
</dbReference>
<dbReference type="RefSeq" id="WP_002209821.1">
    <property type="nucleotide sequence ID" value="NZ_CP009906.1"/>
</dbReference>
<dbReference type="SMR" id="Q1C5I4"/>
<dbReference type="GeneID" id="57975841"/>
<dbReference type="KEGG" id="ypa:YPA_2323"/>
<dbReference type="Proteomes" id="UP000001971">
    <property type="component" value="Chromosome"/>
</dbReference>
<dbReference type="GO" id="GO:0005737">
    <property type="term" value="C:cytoplasm"/>
    <property type="evidence" value="ECO:0007669"/>
    <property type="project" value="UniProtKB-SubCell"/>
</dbReference>
<dbReference type="GO" id="GO:0005524">
    <property type="term" value="F:ATP binding"/>
    <property type="evidence" value="ECO:0007669"/>
    <property type="project" value="UniProtKB-UniRule"/>
</dbReference>
<dbReference type="GO" id="GO:0046872">
    <property type="term" value="F:metal ion binding"/>
    <property type="evidence" value="ECO:0007669"/>
    <property type="project" value="UniProtKB-KW"/>
</dbReference>
<dbReference type="GO" id="GO:0004550">
    <property type="term" value="F:nucleoside diphosphate kinase activity"/>
    <property type="evidence" value="ECO:0007669"/>
    <property type="project" value="UniProtKB-UniRule"/>
</dbReference>
<dbReference type="GO" id="GO:0006241">
    <property type="term" value="P:CTP biosynthetic process"/>
    <property type="evidence" value="ECO:0007669"/>
    <property type="project" value="UniProtKB-UniRule"/>
</dbReference>
<dbReference type="GO" id="GO:0006183">
    <property type="term" value="P:GTP biosynthetic process"/>
    <property type="evidence" value="ECO:0007669"/>
    <property type="project" value="UniProtKB-UniRule"/>
</dbReference>
<dbReference type="GO" id="GO:0006228">
    <property type="term" value="P:UTP biosynthetic process"/>
    <property type="evidence" value="ECO:0007669"/>
    <property type="project" value="UniProtKB-UniRule"/>
</dbReference>
<dbReference type="CDD" id="cd04413">
    <property type="entry name" value="NDPk_I"/>
    <property type="match status" value="1"/>
</dbReference>
<dbReference type="FunFam" id="3.30.70.141:FF:000001">
    <property type="entry name" value="Nucleoside diphosphate kinase"/>
    <property type="match status" value="1"/>
</dbReference>
<dbReference type="Gene3D" id="3.30.70.141">
    <property type="entry name" value="Nucleoside diphosphate kinase-like domain"/>
    <property type="match status" value="1"/>
</dbReference>
<dbReference type="HAMAP" id="MF_00451">
    <property type="entry name" value="NDP_kinase"/>
    <property type="match status" value="1"/>
</dbReference>
<dbReference type="InterPro" id="IPR034907">
    <property type="entry name" value="NDK-like_dom"/>
</dbReference>
<dbReference type="InterPro" id="IPR036850">
    <property type="entry name" value="NDK-like_dom_sf"/>
</dbReference>
<dbReference type="InterPro" id="IPR001564">
    <property type="entry name" value="Nucleoside_diP_kinase"/>
</dbReference>
<dbReference type="InterPro" id="IPR023005">
    <property type="entry name" value="Nucleoside_diP_kinase_AS"/>
</dbReference>
<dbReference type="NCBIfam" id="NF001908">
    <property type="entry name" value="PRK00668.1"/>
    <property type="match status" value="1"/>
</dbReference>
<dbReference type="PANTHER" id="PTHR46161">
    <property type="entry name" value="NUCLEOSIDE DIPHOSPHATE KINASE"/>
    <property type="match status" value="1"/>
</dbReference>
<dbReference type="PANTHER" id="PTHR46161:SF3">
    <property type="entry name" value="NUCLEOSIDE DIPHOSPHATE KINASE DDB_G0292928-RELATED"/>
    <property type="match status" value="1"/>
</dbReference>
<dbReference type="Pfam" id="PF00334">
    <property type="entry name" value="NDK"/>
    <property type="match status" value="1"/>
</dbReference>
<dbReference type="PRINTS" id="PR01243">
    <property type="entry name" value="NUCDPKINASE"/>
</dbReference>
<dbReference type="SMART" id="SM00562">
    <property type="entry name" value="NDK"/>
    <property type="match status" value="1"/>
</dbReference>
<dbReference type="SUPFAM" id="SSF54919">
    <property type="entry name" value="Nucleoside diphosphate kinase, NDK"/>
    <property type="match status" value="1"/>
</dbReference>
<dbReference type="PROSITE" id="PS00469">
    <property type="entry name" value="NDPK"/>
    <property type="match status" value="1"/>
</dbReference>
<dbReference type="PROSITE" id="PS51374">
    <property type="entry name" value="NDPK_LIKE"/>
    <property type="match status" value="1"/>
</dbReference>
<protein>
    <recommendedName>
        <fullName evidence="1">Nucleoside diphosphate kinase</fullName>
        <shortName evidence="1">NDK</shortName>
        <shortName evidence="1">NDP kinase</shortName>
        <ecNumber evidence="1">2.7.4.6</ecNumber>
    </recommendedName>
    <alternativeName>
        <fullName evidence="1">Nucleoside-2-P kinase</fullName>
    </alternativeName>
</protein>
<sequence length="142" mass="15631">MALERTFSIIKPNAVANNDIGAIYARFERAGFKIIAAKMLHLTKEQAEGFYAEHKGRPFFDGLVEFMTSGPIMVQVLEGENAVQRHRDIMGATNPDNALAGTLRADFSDSFTANAVHGSDAVESAQREIAYFFAADEIFPRS</sequence>
<name>NDK_YERPA</name>
<organism>
    <name type="scientific">Yersinia pestis bv. Antiqua (strain Antiqua)</name>
    <dbReference type="NCBI Taxonomy" id="360102"/>
    <lineage>
        <taxon>Bacteria</taxon>
        <taxon>Pseudomonadati</taxon>
        <taxon>Pseudomonadota</taxon>
        <taxon>Gammaproteobacteria</taxon>
        <taxon>Enterobacterales</taxon>
        <taxon>Yersiniaceae</taxon>
        <taxon>Yersinia</taxon>
    </lineage>
</organism>
<proteinExistence type="inferred from homology"/>
<evidence type="ECO:0000255" key="1">
    <source>
        <dbReference type="HAMAP-Rule" id="MF_00451"/>
    </source>
</evidence>
<reference key="1">
    <citation type="journal article" date="2006" name="J. Bacteriol.">
        <title>Complete genome sequence of Yersinia pestis strains Antiqua and Nepal516: evidence of gene reduction in an emerging pathogen.</title>
        <authorList>
            <person name="Chain P.S.G."/>
            <person name="Hu P."/>
            <person name="Malfatti S.A."/>
            <person name="Radnedge L."/>
            <person name="Larimer F."/>
            <person name="Vergez L.M."/>
            <person name="Worsham P."/>
            <person name="Chu M.C."/>
            <person name="Andersen G.L."/>
        </authorList>
    </citation>
    <scope>NUCLEOTIDE SEQUENCE [LARGE SCALE GENOMIC DNA]</scope>
    <source>
        <strain>Antiqua</strain>
    </source>
</reference>
<comment type="function">
    <text evidence="1">Major role in the synthesis of nucleoside triphosphates other than ATP. The ATP gamma phosphate is transferred to the NDP beta phosphate via a ping-pong mechanism, using a phosphorylated active-site intermediate.</text>
</comment>
<comment type="catalytic activity">
    <reaction evidence="1">
        <text>a 2'-deoxyribonucleoside 5'-diphosphate + ATP = a 2'-deoxyribonucleoside 5'-triphosphate + ADP</text>
        <dbReference type="Rhea" id="RHEA:44640"/>
        <dbReference type="ChEBI" id="CHEBI:30616"/>
        <dbReference type="ChEBI" id="CHEBI:61560"/>
        <dbReference type="ChEBI" id="CHEBI:73316"/>
        <dbReference type="ChEBI" id="CHEBI:456216"/>
        <dbReference type="EC" id="2.7.4.6"/>
    </reaction>
</comment>
<comment type="catalytic activity">
    <reaction evidence="1">
        <text>a ribonucleoside 5'-diphosphate + ATP = a ribonucleoside 5'-triphosphate + ADP</text>
        <dbReference type="Rhea" id="RHEA:18113"/>
        <dbReference type="ChEBI" id="CHEBI:30616"/>
        <dbReference type="ChEBI" id="CHEBI:57930"/>
        <dbReference type="ChEBI" id="CHEBI:61557"/>
        <dbReference type="ChEBI" id="CHEBI:456216"/>
        <dbReference type="EC" id="2.7.4.6"/>
    </reaction>
</comment>
<comment type="cofactor">
    <cofactor evidence="1">
        <name>Mg(2+)</name>
        <dbReference type="ChEBI" id="CHEBI:18420"/>
    </cofactor>
</comment>
<comment type="subunit">
    <text evidence="1">Homotetramer.</text>
</comment>
<comment type="subcellular location">
    <subcellularLocation>
        <location evidence="1">Cytoplasm</location>
    </subcellularLocation>
</comment>
<comment type="similarity">
    <text evidence="1">Belongs to the NDK family.</text>
</comment>
<feature type="chain" id="PRO_0000267809" description="Nucleoside diphosphate kinase">
    <location>
        <begin position="1"/>
        <end position="142"/>
    </location>
</feature>
<feature type="active site" description="Pros-phosphohistidine intermediate" evidence="1">
    <location>
        <position position="117"/>
    </location>
</feature>
<feature type="binding site" evidence="1">
    <location>
        <position position="11"/>
    </location>
    <ligand>
        <name>ATP</name>
        <dbReference type="ChEBI" id="CHEBI:30616"/>
    </ligand>
</feature>
<feature type="binding site" evidence="1">
    <location>
        <position position="59"/>
    </location>
    <ligand>
        <name>ATP</name>
        <dbReference type="ChEBI" id="CHEBI:30616"/>
    </ligand>
</feature>
<feature type="binding site" evidence="1">
    <location>
        <position position="87"/>
    </location>
    <ligand>
        <name>ATP</name>
        <dbReference type="ChEBI" id="CHEBI:30616"/>
    </ligand>
</feature>
<feature type="binding site" evidence="1">
    <location>
        <position position="93"/>
    </location>
    <ligand>
        <name>ATP</name>
        <dbReference type="ChEBI" id="CHEBI:30616"/>
    </ligand>
</feature>
<feature type="binding site" evidence="1">
    <location>
        <position position="104"/>
    </location>
    <ligand>
        <name>ATP</name>
        <dbReference type="ChEBI" id="CHEBI:30616"/>
    </ligand>
</feature>
<feature type="binding site" evidence="1">
    <location>
        <position position="114"/>
    </location>
    <ligand>
        <name>ATP</name>
        <dbReference type="ChEBI" id="CHEBI:30616"/>
    </ligand>
</feature>